<organism>
    <name type="scientific">Alkalilimnicola ehrlichii (strain ATCC BAA-1101 / DSM 17681 / MLHE-1)</name>
    <dbReference type="NCBI Taxonomy" id="187272"/>
    <lineage>
        <taxon>Bacteria</taxon>
        <taxon>Pseudomonadati</taxon>
        <taxon>Pseudomonadota</taxon>
        <taxon>Gammaproteobacteria</taxon>
        <taxon>Chromatiales</taxon>
        <taxon>Ectothiorhodospiraceae</taxon>
        <taxon>Alkalilimnicola</taxon>
    </lineage>
</organism>
<protein>
    <recommendedName>
        <fullName evidence="1">Glycerol kinase</fullName>
        <ecNumber evidence="1">2.7.1.30</ecNumber>
    </recommendedName>
    <alternativeName>
        <fullName evidence="1">ATP:glycerol 3-phosphotransferase</fullName>
    </alternativeName>
    <alternativeName>
        <fullName evidence="1">Glycerokinase</fullName>
        <shortName evidence="1">GK</shortName>
    </alternativeName>
</protein>
<feature type="chain" id="PRO_1000098710" description="Glycerol kinase">
    <location>
        <begin position="1"/>
        <end position="495"/>
    </location>
</feature>
<feature type="binding site" evidence="1">
    <location>
        <position position="11"/>
    </location>
    <ligand>
        <name>ADP</name>
        <dbReference type="ChEBI" id="CHEBI:456216"/>
    </ligand>
</feature>
<feature type="binding site" evidence="1">
    <location>
        <position position="11"/>
    </location>
    <ligand>
        <name>ATP</name>
        <dbReference type="ChEBI" id="CHEBI:30616"/>
    </ligand>
</feature>
<feature type="binding site" evidence="1">
    <location>
        <position position="11"/>
    </location>
    <ligand>
        <name>sn-glycerol 3-phosphate</name>
        <dbReference type="ChEBI" id="CHEBI:57597"/>
    </ligand>
</feature>
<feature type="binding site" evidence="1">
    <location>
        <position position="12"/>
    </location>
    <ligand>
        <name>ATP</name>
        <dbReference type="ChEBI" id="CHEBI:30616"/>
    </ligand>
</feature>
<feature type="binding site" evidence="1">
    <location>
        <position position="13"/>
    </location>
    <ligand>
        <name>ATP</name>
        <dbReference type="ChEBI" id="CHEBI:30616"/>
    </ligand>
</feature>
<feature type="binding site" evidence="1">
    <location>
        <position position="15"/>
    </location>
    <ligand>
        <name>ADP</name>
        <dbReference type="ChEBI" id="CHEBI:456216"/>
    </ligand>
</feature>
<feature type="binding site" evidence="1">
    <location>
        <position position="81"/>
    </location>
    <ligand>
        <name>glycerol</name>
        <dbReference type="ChEBI" id="CHEBI:17754"/>
    </ligand>
</feature>
<feature type="binding site" evidence="1">
    <location>
        <position position="81"/>
    </location>
    <ligand>
        <name>sn-glycerol 3-phosphate</name>
        <dbReference type="ChEBI" id="CHEBI:57597"/>
    </ligand>
</feature>
<feature type="binding site" evidence="1">
    <location>
        <position position="82"/>
    </location>
    <ligand>
        <name>glycerol</name>
        <dbReference type="ChEBI" id="CHEBI:17754"/>
    </ligand>
</feature>
<feature type="binding site" evidence="1">
    <location>
        <position position="82"/>
    </location>
    <ligand>
        <name>sn-glycerol 3-phosphate</name>
        <dbReference type="ChEBI" id="CHEBI:57597"/>
    </ligand>
</feature>
<feature type="binding site" evidence="1">
    <location>
        <position position="133"/>
    </location>
    <ligand>
        <name>glycerol</name>
        <dbReference type="ChEBI" id="CHEBI:17754"/>
    </ligand>
</feature>
<feature type="binding site" evidence="1">
    <location>
        <position position="133"/>
    </location>
    <ligand>
        <name>sn-glycerol 3-phosphate</name>
        <dbReference type="ChEBI" id="CHEBI:57597"/>
    </ligand>
</feature>
<feature type="binding site" evidence="1">
    <location>
        <position position="242"/>
    </location>
    <ligand>
        <name>glycerol</name>
        <dbReference type="ChEBI" id="CHEBI:17754"/>
    </ligand>
</feature>
<feature type="binding site" evidence="1">
    <location>
        <position position="242"/>
    </location>
    <ligand>
        <name>sn-glycerol 3-phosphate</name>
        <dbReference type="ChEBI" id="CHEBI:57597"/>
    </ligand>
</feature>
<feature type="binding site" evidence="1">
    <location>
        <position position="243"/>
    </location>
    <ligand>
        <name>glycerol</name>
        <dbReference type="ChEBI" id="CHEBI:17754"/>
    </ligand>
</feature>
<feature type="binding site" evidence="1">
    <location>
        <position position="264"/>
    </location>
    <ligand>
        <name>ADP</name>
        <dbReference type="ChEBI" id="CHEBI:456216"/>
    </ligand>
</feature>
<feature type="binding site" evidence="1">
    <location>
        <position position="264"/>
    </location>
    <ligand>
        <name>ATP</name>
        <dbReference type="ChEBI" id="CHEBI:30616"/>
    </ligand>
</feature>
<feature type="binding site" evidence="1">
    <location>
        <position position="307"/>
    </location>
    <ligand>
        <name>ADP</name>
        <dbReference type="ChEBI" id="CHEBI:456216"/>
    </ligand>
</feature>
<feature type="binding site" evidence="1">
    <location>
        <position position="307"/>
    </location>
    <ligand>
        <name>ATP</name>
        <dbReference type="ChEBI" id="CHEBI:30616"/>
    </ligand>
</feature>
<feature type="binding site" evidence="1">
    <location>
        <position position="311"/>
    </location>
    <ligand>
        <name>ATP</name>
        <dbReference type="ChEBI" id="CHEBI:30616"/>
    </ligand>
</feature>
<feature type="binding site" evidence="1">
    <location>
        <position position="408"/>
    </location>
    <ligand>
        <name>ADP</name>
        <dbReference type="ChEBI" id="CHEBI:456216"/>
    </ligand>
</feature>
<feature type="binding site" evidence="1">
    <location>
        <position position="408"/>
    </location>
    <ligand>
        <name>ATP</name>
        <dbReference type="ChEBI" id="CHEBI:30616"/>
    </ligand>
</feature>
<feature type="binding site" evidence="1">
    <location>
        <position position="412"/>
    </location>
    <ligand>
        <name>ADP</name>
        <dbReference type="ChEBI" id="CHEBI:456216"/>
    </ligand>
</feature>
<keyword id="KW-0067">ATP-binding</keyword>
<keyword id="KW-0319">Glycerol metabolism</keyword>
<keyword id="KW-0418">Kinase</keyword>
<keyword id="KW-0547">Nucleotide-binding</keyword>
<keyword id="KW-1185">Reference proteome</keyword>
<keyword id="KW-0808">Transferase</keyword>
<evidence type="ECO:0000255" key="1">
    <source>
        <dbReference type="HAMAP-Rule" id="MF_00186"/>
    </source>
</evidence>
<dbReference type="EC" id="2.7.1.30" evidence="1"/>
<dbReference type="EMBL" id="CP000453">
    <property type="protein sequence ID" value="ABI56664.1"/>
    <property type="molecule type" value="Genomic_DNA"/>
</dbReference>
<dbReference type="RefSeq" id="WP_011629059.1">
    <property type="nucleotide sequence ID" value="NC_008340.1"/>
</dbReference>
<dbReference type="SMR" id="Q0A923"/>
<dbReference type="KEGG" id="aeh:Mlg_1315"/>
<dbReference type="eggNOG" id="COG0554">
    <property type="taxonomic scope" value="Bacteria"/>
</dbReference>
<dbReference type="HOGENOM" id="CLU_009281_2_3_6"/>
<dbReference type="OrthoDB" id="9805576at2"/>
<dbReference type="UniPathway" id="UPA00618">
    <property type="reaction ID" value="UER00672"/>
</dbReference>
<dbReference type="Proteomes" id="UP000001962">
    <property type="component" value="Chromosome"/>
</dbReference>
<dbReference type="GO" id="GO:0005829">
    <property type="term" value="C:cytosol"/>
    <property type="evidence" value="ECO:0007669"/>
    <property type="project" value="TreeGrafter"/>
</dbReference>
<dbReference type="GO" id="GO:0005524">
    <property type="term" value="F:ATP binding"/>
    <property type="evidence" value="ECO:0007669"/>
    <property type="project" value="UniProtKB-UniRule"/>
</dbReference>
<dbReference type="GO" id="GO:0004370">
    <property type="term" value="F:glycerol kinase activity"/>
    <property type="evidence" value="ECO:0000250"/>
    <property type="project" value="UniProtKB"/>
</dbReference>
<dbReference type="GO" id="GO:0019563">
    <property type="term" value="P:glycerol catabolic process"/>
    <property type="evidence" value="ECO:0007669"/>
    <property type="project" value="UniProtKB-UniRule"/>
</dbReference>
<dbReference type="GO" id="GO:0006071">
    <property type="term" value="P:glycerol metabolic process"/>
    <property type="evidence" value="ECO:0000250"/>
    <property type="project" value="UniProtKB"/>
</dbReference>
<dbReference type="GO" id="GO:0006072">
    <property type="term" value="P:glycerol-3-phosphate metabolic process"/>
    <property type="evidence" value="ECO:0007669"/>
    <property type="project" value="InterPro"/>
</dbReference>
<dbReference type="CDD" id="cd07786">
    <property type="entry name" value="FGGY_EcGK_like"/>
    <property type="match status" value="1"/>
</dbReference>
<dbReference type="FunFam" id="3.30.420.40:FF:000007">
    <property type="entry name" value="Glycerol kinase"/>
    <property type="match status" value="1"/>
</dbReference>
<dbReference type="FunFam" id="3.30.420.40:FF:000008">
    <property type="entry name" value="Glycerol kinase"/>
    <property type="match status" value="1"/>
</dbReference>
<dbReference type="Gene3D" id="3.30.420.40">
    <property type="match status" value="2"/>
</dbReference>
<dbReference type="HAMAP" id="MF_00186">
    <property type="entry name" value="Glycerol_kin"/>
    <property type="match status" value="1"/>
</dbReference>
<dbReference type="InterPro" id="IPR043129">
    <property type="entry name" value="ATPase_NBD"/>
</dbReference>
<dbReference type="InterPro" id="IPR000577">
    <property type="entry name" value="Carb_kinase_FGGY"/>
</dbReference>
<dbReference type="InterPro" id="IPR018483">
    <property type="entry name" value="Carb_kinase_FGGY_CS"/>
</dbReference>
<dbReference type="InterPro" id="IPR018485">
    <property type="entry name" value="FGGY_C"/>
</dbReference>
<dbReference type="InterPro" id="IPR018484">
    <property type="entry name" value="FGGY_N"/>
</dbReference>
<dbReference type="InterPro" id="IPR005999">
    <property type="entry name" value="Glycerol_kin"/>
</dbReference>
<dbReference type="NCBIfam" id="TIGR01311">
    <property type="entry name" value="glycerol_kin"/>
    <property type="match status" value="1"/>
</dbReference>
<dbReference type="NCBIfam" id="NF000756">
    <property type="entry name" value="PRK00047.1"/>
    <property type="match status" value="1"/>
</dbReference>
<dbReference type="PANTHER" id="PTHR10196:SF69">
    <property type="entry name" value="GLYCEROL KINASE"/>
    <property type="match status" value="1"/>
</dbReference>
<dbReference type="PANTHER" id="PTHR10196">
    <property type="entry name" value="SUGAR KINASE"/>
    <property type="match status" value="1"/>
</dbReference>
<dbReference type="Pfam" id="PF02782">
    <property type="entry name" value="FGGY_C"/>
    <property type="match status" value="1"/>
</dbReference>
<dbReference type="Pfam" id="PF00370">
    <property type="entry name" value="FGGY_N"/>
    <property type="match status" value="1"/>
</dbReference>
<dbReference type="PIRSF" id="PIRSF000538">
    <property type="entry name" value="GlpK"/>
    <property type="match status" value="1"/>
</dbReference>
<dbReference type="SUPFAM" id="SSF53067">
    <property type="entry name" value="Actin-like ATPase domain"/>
    <property type="match status" value="2"/>
</dbReference>
<dbReference type="PROSITE" id="PS00933">
    <property type="entry name" value="FGGY_KINASES_1"/>
    <property type="match status" value="1"/>
</dbReference>
<dbReference type="PROSITE" id="PS00445">
    <property type="entry name" value="FGGY_KINASES_2"/>
    <property type="match status" value="1"/>
</dbReference>
<accession>Q0A923</accession>
<name>GLPK_ALKEH</name>
<comment type="function">
    <text evidence="1">Key enzyme in the regulation of glycerol uptake and metabolism. Catalyzes the phosphorylation of glycerol to yield sn-glycerol 3-phosphate.</text>
</comment>
<comment type="catalytic activity">
    <reaction evidence="1">
        <text>glycerol + ATP = sn-glycerol 3-phosphate + ADP + H(+)</text>
        <dbReference type="Rhea" id="RHEA:21644"/>
        <dbReference type="ChEBI" id="CHEBI:15378"/>
        <dbReference type="ChEBI" id="CHEBI:17754"/>
        <dbReference type="ChEBI" id="CHEBI:30616"/>
        <dbReference type="ChEBI" id="CHEBI:57597"/>
        <dbReference type="ChEBI" id="CHEBI:456216"/>
        <dbReference type="EC" id="2.7.1.30"/>
    </reaction>
</comment>
<comment type="activity regulation">
    <text evidence="1">Inhibited by fructose 1,6-bisphosphate (FBP).</text>
</comment>
<comment type="pathway">
    <text evidence="1">Polyol metabolism; glycerol degradation via glycerol kinase pathway; sn-glycerol 3-phosphate from glycerol: step 1/1.</text>
</comment>
<comment type="similarity">
    <text evidence="1">Belongs to the FGGY kinase family.</text>
</comment>
<sequence length="495" mass="53124">MQAILALDQGTTSSRAIVYDAHGGVLGTAQQDFPQYFPQPGWVEHDPGEIWQSQYRVMIQAVERAGIPWSAIAGLGLTNQRETTLLWDRATGEPLHRAIVWQDRRTARLCDDLRRDGHERLFRERTGLLLDPYFSGTKLRWLLDHVPGARRRAEAGELAFGTVDSWLIWQLTGGRLHLTDASNASRTLLCNIHSGDWDPDLLAALDIPAALLPEIIDSSGVCGTTCCAGVPEGIPIAGVAGDQQAALYGQGCHEAGLAKCTYGTGAFLLMHTGERPIASANRLLTTVAWRIGGRTAYALEGSVFIAGAVVQWLRDGLGLIRSSDEIEALARQVPDTGGVYLVPAFAGLGAPHWDPDARGILVGMTRGTERPHIARAALESMAFQATEVIGAMEVDAGLAVKELRVDGGASANDLLMQFQADLLGAPVLRPADTEATAAGAAALAARAVGLNGARPSAEAAFTAFSPRLSRYEVEQRMATWQRAVRRAGGWARDDD</sequence>
<gene>
    <name evidence="1" type="primary">glpK</name>
    <name type="ordered locus">Mlg_1315</name>
</gene>
<proteinExistence type="inferred from homology"/>
<reference key="1">
    <citation type="submission" date="2006-08" db="EMBL/GenBank/DDBJ databases">
        <title>Complete sequence of Alkalilimnicola ehrilichei MLHE-1.</title>
        <authorList>
            <person name="Copeland A."/>
            <person name="Lucas S."/>
            <person name="Lapidus A."/>
            <person name="Barry K."/>
            <person name="Detter J.C."/>
            <person name="Glavina del Rio T."/>
            <person name="Hammon N."/>
            <person name="Israni S."/>
            <person name="Dalin E."/>
            <person name="Tice H."/>
            <person name="Pitluck S."/>
            <person name="Sims D."/>
            <person name="Brettin T."/>
            <person name="Bruce D."/>
            <person name="Han C."/>
            <person name="Tapia R."/>
            <person name="Gilna P."/>
            <person name="Schmutz J."/>
            <person name="Larimer F."/>
            <person name="Land M."/>
            <person name="Hauser L."/>
            <person name="Kyrpides N."/>
            <person name="Mikhailova N."/>
            <person name="Oremland R.S."/>
            <person name="Hoeft S.E."/>
            <person name="Switzer-Blum J."/>
            <person name="Kulp T."/>
            <person name="King G."/>
            <person name="Tabita R."/>
            <person name="Witte B."/>
            <person name="Santini J.M."/>
            <person name="Basu P."/>
            <person name="Hollibaugh J.T."/>
            <person name="Xie G."/>
            <person name="Stolz J.F."/>
            <person name="Richardson P."/>
        </authorList>
    </citation>
    <scope>NUCLEOTIDE SEQUENCE [LARGE SCALE GENOMIC DNA]</scope>
    <source>
        <strain>ATCC BAA-1101 / DSM 17681 / MLHE-1</strain>
    </source>
</reference>